<name>ILVC_HELHP</name>
<dbReference type="EC" id="1.1.1.86" evidence="1"/>
<dbReference type="EMBL" id="AE017125">
    <property type="protein sequence ID" value="AAP77801.1"/>
    <property type="molecule type" value="Genomic_DNA"/>
</dbReference>
<dbReference type="RefSeq" id="WP_011116044.1">
    <property type="nucleotide sequence ID" value="NC_004917.1"/>
</dbReference>
<dbReference type="SMR" id="Q7VGW6"/>
<dbReference type="STRING" id="235279.HH_1204"/>
<dbReference type="KEGG" id="hhe:HH_1204"/>
<dbReference type="eggNOG" id="COG0059">
    <property type="taxonomic scope" value="Bacteria"/>
</dbReference>
<dbReference type="HOGENOM" id="CLU_033821_0_1_7"/>
<dbReference type="OrthoDB" id="9804088at2"/>
<dbReference type="UniPathway" id="UPA00047">
    <property type="reaction ID" value="UER00056"/>
</dbReference>
<dbReference type="UniPathway" id="UPA00049">
    <property type="reaction ID" value="UER00060"/>
</dbReference>
<dbReference type="Proteomes" id="UP000002495">
    <property type="component" value="Chromosome"/>
</dbReference>
<dbReference type="GO" id="GO:0005829">
    <property type="term" value="C:cytosol"/>
    <property type="evidence" value="ECO:0007669"/>
    <property type="project" value="TreeGrafter"/>
</dbReference>
<dbReference type="GO" id="GO:0004455">
    <property type="term" value="F:ketol-acid reductoisomerase activity"/>
    <property type="evidence" value="ECO:0007669"/>
    <property type="project" value="UniProtKB-UniRule"/>
</dbReference>
<dbReference type="GO" id="GO:0000287">
    <property type="term" value="F:magnesium ion binding"/>
    <property type="evidence" value="ECO:0007669"/>
    <property type="project" value="UniProtKB-UniRule"/>
</dbReference>
<dbReference type="GO" id="GO:0050661">
    <property type="term" value="F:NADP binding"/>
    <property type="evidence" value="ECO:0007669"/>
    <property type="project" value="InterPro"/>
</dbReference>
<dbReference type="GO" id="GO:0009097">
    <property type="term" value="P:isoleucine biosynthetic process"/>
    <property type="evidence" value="ECO:0007669"/>
    <property type="project" value="UniProtKB-UniRule"/>
</dbReference>
<dbReference type="GO" id="GO:0009099">
    <property type="term" value="P:L-valine biosynthetic process"/>
    <property type="evidence" value="ECO:0007669"/>
    <property type="project" value="UniProtKB-UniRule"/>
</dbReference>
<dbReference type="FunFam" id="3.40.50.720:FF:000023">
    <property type="entry name" value="Ketol-acid reductoisomerase (NADP(+))"/>
    <property type="match status" value="1"/>
</dbReference>
<dbReference type="Gene3D" id="6.10.240.10">
    <property type="match status" value="1"/>
</dbReference>
<dbReference type="Gene3D" id="3.40.50.720">
    <property type="entry name" value="NAD(P)-binding Rossmann-like Domain"/>
    <property type="match status" value="1"/>
</dbReference>
<dbReference type="HAMAP" id="MF_00435">
    <property type="entry name" value="IlvC"/>
    <property type="match status" value="1"/>
</dbReference>
<dbReference type="InterPro" id="IPR008927">
    <property type="entry name" value="6-PGluconate_DH-like_C_sf"/>
</dbReference>
<dbReference type="InterPro" id="IPR013023">
    <property type="entry name" value="KARI"/>
</dbReference>
<dbReference type="InterPro" id="IPR000506">
    <property type="entry name" value="KARI_C"/>
</dbReference>
<dbReference type="InterPro" id="IPR013116">
    <property type="entry name" value="KARI_N"/>
</dbReference>
<dbReference type="InterPro" id="IPR014359">
    <property type="entry name" value="KARI_prok"/>
</dbReference>
<dbReference type="InterPro" id="IPR036291">
    <property type="entry name" value="NAD(P)-bd_dom_sf"/>
</dbReference>
<dbReference type="NCBIfam" id="TIGR00465">
    <property type="entry name" value="ilvC"/>
    <property type="match status" value="1"/>
</dbReference>
<dbReference type="NCBIfam" id="NF004017">
    <property type="entry name" value="PRK05479.1"/>
    <property type="match status" value="1"/>
</dbReference>
<dbReference type="NCBIfam" id="NF009940">
    <property type="entry name" value="PRK13403.1"/>
    <property type="match status" value="1"/>
</dbReference>
<dbReference type="PANTHER" id="PTHR21371">
    <property type="entry name" value="KETOL-ACID REDUCTOISOMERASE, MITOCHONDRIAL"/>
    <property type="match status" value="1"/>
</dbReference>
<dbReference type="PANTHER" id="PTHR21371:SF1">
    <property type="entry name" value="KETOL-ACID REDUCTOISOMERASE, MITOCHONDRIAL"/>
    <property type="match status" value="1"/>
</dbReference>
<dbReference type="Pfam" id="PF01450">
    <property type="entry name" value="KARI_C"/>
    <property type="match status" value="1"/>
</dbReference>
<dbReference type="Pfam" id="PF07991">
    <property type="entry name" value="KARI_N"/>
    <property type="match status" value="1"/>
</dbReference>
<dbReference type="PIRSF" id="PIRSF000116">
    <property type="entry name" value="IlvC_gammaproteo"/>
    <property type="match status" value="1"/>
</dbReference>
<dbReference type="SUPFAM" id="SSF48179">
    <property type="entry name" value="6-phosphogluconate dehydrogenase C-terminal domain-like"/>
    <property type="match status" value="1"/>
</dbReference>
<dbReference type="SUPFAM" id="SSF51735">
    <property type="entry name" value="NAD(P)-binding Rossmann-fold domains"/>
    <property type="match status" value="1"/>
</dbReference>
<dbReference type="PROSITE" id="PS51851">
    <property type="entry name" value="KARI_C"/>
    <property type="match status" value="1"/>
</dbReference>
<dbReference type="PROSITE" id="PS51850">
    <property type="entry name" value="KARI_N"/>
    <property type="match status" value="1"/>
</dbReference>
<evidence type="ECO:0000255" key="1">
    <source>
        <dbReference type="HAMAP-Rule" id="MF_00435"/>
    </source>
</evidence>
<evidence type="ECO:0000255" key="2">
    <source>
        <dbReference type="PROSITE-ProRule" id="PRU01197"/>
    </source>
</evidence>
<evidence type="ECO:0000255" key="3">
    <source>
        <dbReference type="PROSITE-ProRule" id="PRU01198"/>
    </source>
</evidence>
<feature type="chain" id="PRO_0000151315" description="Ketol-acid reductoisomerase (NADP(+))">
    <location>
        <begin position="1"/>
        <end position="341"/>
    </location>
</feature>
<feature type="domain" description="KARI N-terminal Rossmann" evidence="2">
    <location>
        <begin position="3"/>
        <end position="184"/>
    </location>
</feature>
<feature type="domain" description="KARI C-terminal knotted" evidence="3">
    <location>
        <begin position="185"/>
        <end position="330"/>
    </location>
</feature>
<feature type="active site" evidence="1">
    <location>
        <position position="109"/>
    </location>
</feature>
<feature type="binding site" evidence="1">
    <location>
        <begin position="26"/>
        <end position="29"/>
    </location>
    <ligand>
        <name>NADP(+)</name>
        <dbReference type="ChEBI" id="CHEBI:58349"/>
    </ligand>
</feature>
<feature type="binding site" evidence="1">
    <location>
        <position position="54"/>
    </location>
    <ligand>
        <name>NADP(+)</name>
        <dbReference type="ChEBI" id="CHEBI:58349"/>
    </ligand>
</feature>
<feature type="binding site" evidence="1">
    <location>
        <begin position="84"/>
        <end position="87"/>
    </location>
    <ligand>
        <name>NADP(+)</name>
        <dbReference type="ChEBI" id="CHEBI:58349"/>
    </ligand>
</feature>
<feature type="binding site" evidence="1">
    <location>
        <position position="135"/>
    </location>
    <ligand>
        <name>NADP(+)</name>
        <dbReference type="ChEBI" id="CHEBI:58349"/>
    </ligand>
</feature>
<feature type="binding site" evidence="1">
    <location>
        <position position="193"/>
    </location>
    <ligand>
        <name>Mg(2+)</name>
        <dbReference type="ChEBI" id="CHEBI:18420"/>
        <label>1</label>
    </ligand>
</feature>
<feature type="binding site" evidence="1">
    <location>
        <position position="193"/>
    </location>
    <ligand>
        <name>Mg(2+)</name>
        <dbReference type="ChEBI" id="CHEBI:18420"/>
        <label>2</label>
    </ligand>
</feature>
<feature type="binding site" evidence="1">
    <location>
        <position position="197"/>
    </location>
    <ligand>
        <name>Mg(2+)</name>
        <dbReference type="ChEBI" id="CHEBI:18420"/>
        <label>1</label>
    </ligand>
</feature>
<feature type="binding site" evidence="1">
    <location>
        <position position="229"/>
    </location>
    <ligand>
        <name>Mg(2+)</name>
        <dbReference type="ChEBI" id="CHEBI:18420"/>
        <label>2</label>
    </ligand>
</feature>
<feature type="binding site" evidence="1">
    <location>
        <position position="233"/>
    </location>
    <ligand>
        <name>Mg(2+)</name>
        <dbReference type="ChEBI" id="CHEBI:18420"/>
        <label>2</label>
    </ligand>
</feature>
<feature type="binding site" evidence="1">
    <location>
        <position position="254"/>
    </location>
    <ligand>
        <name>substrate</name>
    </ligand>
</feature>
<sequence>MALKVYYDKDCDLGLIQKKKVAVIGFGSQGHAHAENLRDSGVEVIIGLYRGGSSWVKAEAKGFKVLEVSEATKVADVIMILIPDELQADVFAKDILPSLSEDKIIAFGHGFNIHFGQIKAPKGVGVIMVAPKAPGHTVRSEFVKGGGIPDLIAVEQDTSRGDAKAIALSYASAIGGGRSGIIETTFKDETETDLFGEQAVLCGGVTSLVKAGFETLVEAGYPEEMAYFECLHELKLIVDLIYEGGLANMRYSISNTAEYGDMVSGPRVINEESKKAMKQILKDIQEGRFAKDFILERKAGYARMNAERKNLANHKIEQVGGRLRAMMPWIGANKLVDKERN</sequence>
<protein>
    <recommendedName>
        <fullName evidence="1">Ketol-acid reductoisomerase (NADP(+))</fullName>
        <shortName evidence="1">KARI</shortName>
        <ecNumber evidence="1">1.1.1.86</ecNumber>
    </recommendedName>
    <alternativeName>
        <fullName evidence="1">Acetohydroxy-acid isomeroreductase</fullName>
        <shortName evidence="1">AHIR</shortName>
    </alternativeName>
    <alternativeName>
        <fullName evidence="1">Alpha-keto-beta-hydroxylacyl reductoisomerase</fullName>
    </alternativeName>
    <alternativeName>
        <fullName evidence="1">Ketol-acid reductoisomerase type 1</fullName>
    </alternativeName>
    <alternativeName>
        <fullName evidence="1">Ketol-acid reductoisomerase type I</fullName>
    </alternativeName>
</protein>
<proteinExistence type="inferred from homology"/>
<keyword id="KW-0028">Amino-acid biosynthesis</keyword>
<keyword id="KW-0100">Branched-chain amino acid biosynthesis</keyword>
<keyword id="KW-0460">Magnesium</keyword>
<keyword id="KW-0479">Metal-binding</keyword>
<keyword id="KW-0521">NADP</keyword>
<keyword id="KW-0560">Oxidoreductase</keyword>
<keyword id="KW-1185">Reference proteome</keyword>
<gene>
    <name evidence="1" type="primary">ilvC</name>
    <name type="ordered locus">HH_1204</name>
</gene>
<comment type="function">
    <text evidence="1">Involved in the biosynthesis of branched-chain amino acids (BCAA). Catalyzes an alkyl-migration followed by a ketol-acid reduction of (S)-2-acetolactate (S2AL) to yield (R)-2,3-dihydroxy-isovalerate. In the isomerase reaction, S2AL is rearranged via a Mg-dependent methyl migration to produce 3-hydroxy-3-methyl-2-ketobutyrate (HMKB). In the reductase reaction, this 2-ketoacid undergoes a metal-dependent reduction by NADPH to yield (R)-2,3-dihydroxy-isovalerate.</text>
</comment>
<comment type="catalytic activity">
    <reaction evidence="1">
        <text>(2R)-2,3-dihydroxy-3-methylbutanoate + NADP(+) = (2S)-2-acetolactate + NADPH + H(+)</text>
        <dbReference type="Rhea" id="RHEA:22068"/>
        <dbReference type="ChEBI" id="CHEBI:15378"/>
        <dbReference type="ChEBI" id="CHEBI:49072"/>
        <dbReference type="ChEBI" id="CHEBI:57783"/>
        <dbReference type="ChEBI" id="CHEBI:58349"/>
        <dbReference type="ChEBI" id="CHEBI:58476"/>
        <dbReference type="EC" id="1.1.1.86"/>
    </reaction>
</comment>
<comment type="catalytic activity">
    <reaction evidence="1">
        <text>(2R,3R)-2,3-dihydroxy-3-methylpentanoate + NADP(+) = (S)-2-ethyl-2-hydroxy-3-oxobutanoate + NADPH + H(+)</text>
        <dbReference type="Rhea" id="RHEA:13493"/>
        <dbReference type="ChEBI" id="CHEBI:15378"/>
        <dbReference type="ChEBI" id="CHEBI:49256"/>
        <dbReference type="ChEBI" id="CHEBI:49258"/>
        <dbReference type="ChEBI" id="CHEBI:57783"/>
        <dbReference type="ChEBI" id="CHEBI:58349"/>
        <dbReference type="EC" id="1.1.1.86"/>
    </reaction>
</comment>
<comment type="cofactor">
    <cofactor evidence="1">
        <name>Mg(2+)</name>
        <dbReference type="ChEBI" id="CHEBI:18420"/>
    </cofactor>
    <text evidence="1">Binds 2 magnesium ions per subunit.</text>
</comment>
<comment type="pathway">
    <text evidence="1">Amino-acid biosynthesis; L-isoleucine biosynthesis; L-isoleucine from 2-oxobutanoate: step 2/4.</text>
</comment>
<comment type="pathway">
    <text evidence="1">Amino-acid biosynthesis; L-valine biosynthesis; L-valine from pyruvate: step 2/4.</text>
</comment>
<comment type="similarity">
    <text evidence="1">Belongs to the ketol-acid reductoisomerase family.</text>
</comment>
<organism>
    <name type="scientific">Helicobacter hepaticus (strain ATCC 51449 / 3B1)</name>
    <dbReference type="NCBI Taxonomy" id="235279"/>
    <lineage>
        <taxon>Bacteria</taxon>
        <taxon>Pseudomonadati</taxon>
        <taxon>Campylobacterota</taxon>
        <taxon>Epsilonproteobacteria</taxon>
        <taxon>Campylobacterales</taxon>
        <taxon>Helicobacteraceae</taxon>
        <taxon>Helicobacter</taxon>
    </lineage>
</organism>
<reference key="1">
    <citation type="journal article" date="2003" name="Proc. Natl. Acad. Sci. U.S.A.">
        <title>The complete genome sequence of the carcinogenic bacterium Helicobacter hepaticus.</title>
        <authorList>
            <person name="Suerbaum S."/>
            <person name="Josenhans C."/>
            <person name="Sterzenbach T."/>
            <person name="Drescher B."/>
            <person name="Brandt P."/>
            <person name="Bell M."/>
            <person name="Droege M."/>
            <person name="Fartmann B."/>
            <person name="Fischer H.-P."/>
            <person name="Ge Z."/>
            <person name="Hoerster A."/>
            <person name="Holland R."/>
            <person name="Klein K."/>
            <person name="Koenig J."/>
            <person name="Macko L."/>
            <person name="Mendz G.L."/>
            <person name="Nyakatura G."/>
            <person name="Schauer D.B."/>
            <person name="Shen Z."/>
            <person name="Weber J."/>
            <person name="Frosch M."/>
            <person name="Fox J.G."/>
        </authorList>
    </citation>
    <scope>NUCLEOTIDE SEQUENCE [LARGE SCALE GENOMIC DNA]</scope>
    <source>
        <strain>ATCC 51449 / 3B1</strain>
    </source>
</reference>
<accession>Q7VGW6</accession>